<protein>
    <recommendedName>
        <fullName evidence="1">Small ribosomal subunit protein uS5</fullName>
    </recommendedName>
    <alternativeName>
        <fullName evidence="2">30S ribosomal protein S5</fullName>
    </alternativeName>
</protein>
<reference key="1">
    <citation type="journal article" date="2003" name="Proc. Natl. Acad. Sci. U.S.A.">
        <title>Reductive genome evolution in Buchnera aphidicola.</title>
        <authorList>
            <person name="van Ham R.C.H.J."/>
            <person name="Kamerbeek J."/>
            <person name="Palacios C."/>
            <person name="Rausell C."/>
            <person name="Abascal F."/>
            <person name="Bastolla U."/>
            <person name="Fernandez J.M."/>
            <person name="Jimenez L."/>
            <person name="Postigo M."/>
            <person name="Silva F.J."/>
            <person name="Tamames J."/>
            <person name="Viguera E."/>
            <person name="Latorre A."/>
            <person name="Valencia A."/>
            <person name="Moran F."/>
            <person name="Moya A."/>
        </authorList>
    </citation>
    <scope>NUCLEOTIDE SEQUENCE [LARGE SCALE GENOMIC DNA]</scope>
    <source>
        <strain>Bp</strain>
    </source>
</reference>
<organism>
    <name type="scientific">Buchnera aphidicola subsp. Baizongia pistaciae (strain Bp)</name>
    <dbReference type="NCBI Taxonomy" id="224915"/>
    <lineage>
        <taxon>Bacteria</taxon>
        <taxon>Pseudomonadati</taxon>
        <taxon>Pseudomonadota</taxon>
        <taxon>Gammaproteobacteria</taxon>
        <taxon>Enterobacterales</taxon>
        <taxon>Erwiniaceae</taxon>
        <taxon>Buchnera</taxon>
    </lineage>
</organism>
<keyword id="KW-1185">Reference proteome</keyword>
<keyword id="KW-0687">Ribonucleoprotein</keyword>
<keyword id="KW-0689">Ribosomal protein</keyword>
<keyword id="KW-0694">RNA-binding</keyword>
<keyword id="KW-0699">rRNA-binding</keyword>
<feature type="chain" id="PRO_0000131488" description="Small ribosomal subunit protein uS5">
    <location>
        <begin position="1"/>
        <end position="171"/>
    </location>
</feature>
<feature type="domain" description="S5 DRBM" evidence="1">
    <location>
        <begin position="12"/>
        <end position="75"/>
    </location>
</feature>
<gene>
    <name evidence="1" type="primary">rpsE</name>
    <name type="ordered locus">bbp_450</name>
</gene>
<proteinExistence type="inferred from homology"/>
<sequence>MSNIGRNVSGDLKEKLISVNRVSKTVKGGRIFSFSALTVVGDGHGKVGFGYGKAREVPSAIQKAMEKARRNMIQVPLNNGTLQYSVTGSYTGSYIFMKPASNGTGIIAGGAMRSVLEVAGVHNVLAKTYGSTNPINVVRATMLVLESMKSPEMIALKRNKLVKEILENSYL</sequence>
<accession>Q89A82</accession>
<comment type="function">
    <text evidence="1">With S4 and S12 plays an important role in translational accuracy.</text>
</comment>
<comment type="function">
    <text evidence="1">Located at the back of the 30S subunit body where it stabilizes the conformation of the head with respect to the body.</text>
</comment>
<comment type="subunit">
    <text evidence="1">Part of the 30S ribosomal subunit. Contacts proteins S4 and S8.</text>
</comment>
<comment type="domain">
    <text>The N-terminal domain interacts with the head of the 30S subunit; the C-terminal domain interacts with the body and contacts protein S4. The interaction surface between S4 and S5 is involved in control of translational fidelity.</text>
</comment>
<comment type="similarity">
    <text evidence="1">Belongs to the universal ribosomal protein uS5 family.</text>
</comment>
<comment type="sequence caution" evidence="2">
    <conflict type="erroneous initiation">
        <sequence resource="EMBL-CDS" id="AAO27156"/>
    </conflict>
</comment>
<name>RS5_BUCBP</name>
<evidence type="ECO:0000255" key="1">
    <source>
        <dbReference type="HAMAP-Rule" id="MF_01307"/>
    </source>
</evidence>
<evidence type="ECO:0000305" key="2"/>
<dbReference type="EMBL" id="AE016826">
    <property type="protein sequence ID" value="AAO27156.1"/>
    <property type="status" value="ALT_INIT"/>
    <property type="molecule type" value="Genomic_DNA"/>
</dbReference>
<dbReference type="RefSeq" id="WP_044010575.1">
    <property type="nucleotide sequence ID" value="NC_004545.1"/>
</dbReference>
<dbReference type="SMR" id="Q89A82"/>
<dbReference type="STRING" id="224915.bbp_450"/>
<dbReference type="KEGG" id="bab:bbp_450"/>
<dbReference type="eggNOG" id="COG0098">
    <property type="taxonomic scope" value="Bacteria"/>
</dbReference>
<dbReference type="HOGENOM" id="CLU_065898_2_2_6"/>
<dbReference type="OrthoDB" id="9809045at2"/>
<dbReference type="Proteomes" id="UP000000601">
    <property type="component" value="Chromosome"/>
</dbReference>
<dbReference type="GO" id="GO:0015935">
    <property type="term" value="C:small ribosomal subunit"/>
    <property type="evidence" value="ECO:0007669"/>
    <property type="project" value="InterPro"/>
</dbReference>
<dbReference type="GO" id="GO:0019843">
    <property type="term" value="F:rRNA binding"/>
    <property type="evidence" value="ECO:0007669"/>
    <property type="project" value="UniProtKB-UniRule"/>
</dbReference>
<dbReference type="GO" id="GO:0003735">
    <property type="term" value="F:structural constituent of ribosome"/>
    <property type="evidence" value="ECO:0007669"/>
    <property type="project" value="InterPro"/>
</dbReference>
<dbReference type="GO" id="GO:0006412">
    <property type="term" value="P:translation"/>
    <property type="evidence" value="ECO:0007669"/>
    <property type="project" value="UniProtKB-UniRule"/>
</dbReference>
<dbReference type="FunFam" id="3.30.160.20:FF:000001">
    <property type="entry name" value="30S ribosomal protein S5"/>
    <property type="match status" value="1"/>
</dbReference>
<dbReference type="FunFam" id="3.30.230.10:FF:000002">
    <property type="entry name" value="30S ribosomal protein S5"/>
    <property type="match status" value="1"/>
</dbReference>
<dbReference type="Gene3D" id="3.30.160.20">
    <property type="match status" value="1"/>
</dbReference>
<dbReference type="Gene3D" id="3.30.230.10">
    <property type="match status" value="1"/>
</dbReference>
<dbReference type="HAMAP" id="MF_01307_B">
    <property type="entry name" value="Ribosomal_uS5_B"/>
    <property type="match status" value="1"/>
</dbReference>
<dbReference type="InterPro" id="IPR020568">
    <property type="entry name" value="Ribosomal_Su5_D2-typ_SF"/>
</dbReference>
<dbReference type="InterPro" id="IPR000851">
    <property type="entry name" value="Ribosomal_uS5"/>
</dbReference>
<dbReference type="InterPro" id="IPR005712">
    <property type="entry name" value="Ribosomal_uS5_bac-type"/>
</dbReference>
<dbReference type="InterPro" id="IPR005324">
    <property type="entry name" value="Ribosomal_uS5_C"/>
</dbReference>
<dbReference type="InterPro" id="IPR013810">
    <property type="entry name" value="Ribosomal_uS5_N"/>
</dbReference>
<dbReference type="InterPro" id="IPR018192">
    <property type="entry name" value="Ribosomal_uS5_N_CS"/>
</dbReference>
<dbReference type="InterPro" id="IPR014721">
    <property type="entry name" value="Ribsml_uS5_D2-typ_fold_subgr"/>
</dbReference>
<dbReference type="NCBIfam" id="TIGR01021">
    <property type="entry name" value="rpsE_bact"/>
    <property type="match status" value="1"/>
</dbReference>
<dbReference type="PANTHER" id="PTHR48277">
    <property type="entry name" value="MITOCHONDRIAL RIBOSOMAL PROTEIN S5"/>
    <property type="match status" value="1"/>
</dbReference>
<dbReference type="PANTHER" id="PTHR48277:SF1">
    <property type="entry name" value="MITOCHONDRIAL RIBOSOMAL PROTEIN S5"/>
    <property type="match status" value="1"/>
</dbReference>
<dbReference type="Pfam" id="PF00333">
    <property type="entry name" value="Ribosomal_S5"/>
    <property type="match status" value="1"/>
</dbReference>
<dbReference type="Pfam" id="PF03719">
    <property type="entry name" value="Ribosomal_S5_C"/>
    <property type="match status" value="1"/>
</dbReference>
<dbReference type="SUPFAM" id="SSF54768">
    <property type="entry name" value="dsRNA-binding domain-like"/>
    <property type="match status" value="1"/>
</dbReference>
<dbReference type="SUPFAM" id="SSF54211">
    <property type="entry name" value="Ribosomal protein S5 domain 2-like"/>
    <property type="match status" value="1"/>
</dbReference>
<dbReference type="PROSITE" id="PS00585">
    <property type="entry name" value="RIBOSOMAL_S5"/>
    <property type="match status" value="1"/>
</dbReference>
<dbReference type="PROSITE" id="PS50881">
    <property type="entry name" value="S5_DSRBD"/>
    <property type="match status" value="1"/>
</dbReference>